<sequence>MTNRHLAKFAYREEFKGDTEALAAAVREDASTGSTSQLPLEVQFGKMSNQKTVSVCIIGRPNSGKSTLLNRIIGEKLSIVTPKVQTTRSIITGIITLKDTQVILYDTPGIFEPKGSLEKAMVRCAWSSLHSADLVLLIIDSLKSFDDITHNIVDKLRSLNIVPIFLLNKIDIESKYLNDIKAFLTENHPDSLLFPISALSGKNIDGLLEYITSKAKISPWLYAEDDITDLPMRFIAAEITREQLFLNLQKELPYKLTVQTEKWEDLKDKSVKINQVIVVSRESYKTIILGKNGSKIKEIGAKSRMQMERFFGFPVHLFLFVKVRELWENNQEFYQYMKI</sequence>
<evidence type="ECO:0000255" key="1">
    <source>
        <dbReference type="HAMAP-Rule" id="MF_00367"/>
    </source>
</evidence>
<evidence type="ECO:0000255" key="2">
    <source>
        <dbReference type="PROSITE-ProRule" id="PRU01050"/>
    </source>
</evidence>
<name>ERA_RICCN</name>
<protein>
    <recommendedName>
        <fullName evidence="1">GTPase Era</fullName>
    </recommendedName>
</protein>
<gene>
    <name evidence="1" type="primary">era</name>
    <name type="ordered locus">RC0158</name>
</gene>
<comment type="function">
    <text evidence="1">An essential GTPase that binds both GDP and GTP, with rapid nucleotide exchange. Plays a role in 16S rRNA processing and 30S ribosomal subunit biogenesis and possibly also in cell cycle regulation and energy metabolism.</text>
</comment>
<comment type="subunit">
    <text evidence="1">Monomer.</text>
</comment>
<comment type="subcellular location">
    <subcellularLocation>
        <location>Cytoplasm</location>
    </subcellularLocation>
    <subcellularLocation>
        <location evidence="1">Cell inner membrane</location>
        <topology evidence="1">Peripheral membrane protein</topology>
    </subcellularLocation>
</comment>
<comment type="similarity">
    <text evidence="1 2">Belongs to the TRAFAC class TrmE-Era-EngA-EngB-Septin-like GTPase superfamily. Era GTPase family.</text>
</comment>
<accession>Q92JA9</accession>
<organism>
    <name type="scientific">Rickettsia conorii (strain ATCC VR-613 / Malish 7)</name>
    <dbReference type="NCBI Taxonomy" id="272944"/>
    <lineage>
        <taxon>Bacteria</taxon>
        <taxon>Pseudomonadati</taxon>
        <taxon>Pseudomonadota</taxon>
        <taxon>Alphaproteobacteria</taxon>
        <taxon>Rickettsiales</taxon>
        <taxon>Rickettsiaceae</taxon>
        <taxon>Rickettsieae</taxon>
        <taxon>Rickettsia</taxon>
        <taxon>spotted fever group</taxon>
    </lineage>
</organism>
<reference key="1">
    <citation type="journal article" date="2001" name="Science">
        <title>Mechanisms of evolution in Rickettsia conorii and R. prowazekii.</title>
        <authorList>
            <person name="Ogata H."/>
            <person name="Audic S."/>
            <person name="Renesto-Audiffren P."/>
            <person name="Fournier P.-E."/>
            <person name="Barbe V."/>
            <person name="Samson D."/>
            <person name="Roux V."/>
            <person name="Cossart P."/>
            <person name="Weissenbach J."/>
            <person name="Claverie J.-M."/>
            <person name="Raoult D."/>
        </authorList>
    </citation>
    <scope>NUCLEOTIDE SEQUENCE [LARGE SCALE GENOMIC DNA]</scope>
    <source>
        <strain>ATCC VR-613 / Malish 7</strain>
    </source>
</reference>
<proteinExistence type="inferred from homology"/>
<dbReference type="EMBL" id="AE006914">
    <property type="protein sequence ID" value="AAL02696.1"/>
    <property type="molecule type" value="Genomic_DNA"/>
</dbReference>
<dbReference type="PIR" id="F97719">
    <property type="entry name" value="F97719"/>
</dbReference>
<dbReference type="RefSeq" id="WP_010976834.1">
    <property type="nucleotide sequence ID" value="NC_003103.1"/>
</dbReference>
<dbReference type="SMR" id="Q92JA9"/>
<dbReference type="GeneID" id="928031"/>
<dbReference type="KEGG" id="rco:RC0158"/>
<dbReference type="PATRIC" id="fig|272944.4.peg.187"/>
<dbReference type="HOGENOM" id="CLU_038009_1_1_5"/>
<dbReference type="Proteomes" id="UP000000816">
    <property type="component" value="Chromosome"/>
</dbReference>
<dbReference type="GO" id="GO:0005829">
    <property type="term" value="C:cytosol"/>
    <property type="evidence" value="ECO:0007669"/>
    <property type="project" value="TreeGrafter"/>
</dbReference>
<dbReference type="GO" id="GO:0005886">
    <property type="term" value="C:plasma membrane"/>
    <property type="evidence" value="ECO:0007669"/>
    <property type="project" value="UniProtKB-SubCell"/>
</dbReference>
<dbReference type="GO" id="GO:0005525">
    <property type="term" value="F:GTP binding"/>
    <property type="evidence" value="ECO:0007669"/>
    <property type="project" value="UniProtKB-UniRule"/>
</dbReference>
<dbReference type="GO" id="GO:0003924">
    <property type="term" value="F:GTPase activity"/>
    <property type="evidence" value="ECO:0007669"/>
    <property type="project" value="UniProtKB-UniRule"/>
</dbReference>
<dbReference type="GO" id="GO:0043024">
    <property type="term" value="F:ribosomal small subunit binding"/>
    <property type="evidence" value="ECO:0007669"/>
    <property type="project" value="TreeGrafter"/>
</dbReference>
<dbReference type="GO" id="GO:0070181">
    <property type="term" value="F:small ribosomal subunit rRNA binding"/>
    <property type="evidence" value="ECO:0007669"/>
    <property type="project" value="UniProtKB-UniRule"/>
</dbReference>
<dbReference type="GO" id="GO:0000028">
    <property type="term" value="P:ribosomal small subunit assembly"/>
    <property type="evidence" value="ECO:0007669"/>
    <property type="project" value="TreeGrafter"/>
</dbReference>
<dbReference type="CDD" id="cd04163">
    <property type="entry name" value="Era"/>
    <property type="match status" value="1"/>
</dbReference>
<dbReference type="CDD" id="cd22534">
    <property type="entry name" value="KH-II_Era"/>
    <property type="match status" value="1"/>
</dbReference>
<dbReference type="Gene3D" id="3.30.300.20">
    <property type="match status" value="1"/>
</dbReference>
<dbReference type="Gene3D" id="3.40.50.300">
    <property type="entry name" value="P-loop containing nucleotide triphosphate hydrolases"/>
    <property type="match status" value="1"/>
</dbReference>
<dbReference type="HAMAP" id="MF_00367">
    <property type="entry name" value="GTPase_Era"/>
    <property type="match status" value="1"/>
</dbReference>
<dbReference type="InterPro" id="IPR030388">
    <property type="entry name" value="G_ERA_dom"/>
</dbReference>
<dbReference type="InterPro" id="IPR006073">
    <property type="entry name" value="GTP-bd"/>
</dbReference>
<dbReference type="InterPro" id="IPR005662">
    <property type="entry name" value="GTPase_Era-like"/>
</dbReference>
<dbReference type="InterPro" id="IPR015946">
    <property type="entry name" value="KH_dom-like_a/b"/>
</dbReference>
<dbReference type="InterPro" id="IPR004044">
    <property type="entry name" value="KH_dom_type_2"/>
</dbReference>
<dbReference type="InterPro" id="IPR009019">
    <property type="entry name" value="KH_sf_prok-type"/>
</dbReference>
<dbReference type="InterPro" id="IPR027417">
    <property type="entry name" value="P-loop_NTPase"/>
</dbReference>
<dbReference type="InterPro" id="IPR005728">
    <property type="entry name" value="RPE1"/>
</dbReference>
<dbReference type="InterPro" id="IPR005225">
    <property type="entry name" value="Small_GTP-bd"/>
</dbReference>
<dbReference type="NCBIfam" id="TIGR00436">
    <property type="entry name" value="era"/>
    <property type="match status" value="1"/>
</dbReference>
<dbReference type="NCBIfam" id="NF000908">
    <property type="entry name" value="PRK00089.1"/>
    <property type="match status" value="1"/>
</dbReference>
<dbReference type="NCBIfam" id="TIGR01045">
    <property type="entry name" value="RPE1"/>
    <property type="match status" value="1"/>
</dbReference>
<dbReference type="NCBIfam" id="TIGR00231">
    <property type="entry name" value="small_GTP"/>
    <property type="match status" value="1"/>
</dbReference>
<dbReference type="PANTHER" id="PTHR42698">
    <property type="entry name" value="GTPASE ERA"/>
    <property type="match status" value="1"/>
</dbReference>
<dbReference type="PANTHER" id="PTHR42698:SF1">
    <property type="entry name" value="GTPASE ERA, MITOCHONDRIAL"/>
    <property type="match status" value="1"/>
</dbReference>
<dbReference type="Pfam" id="PF07650">
    <property type="entry name" value="KH_2"/>
    <property type="match status" value="1"/>
</dbReference>
<dbReference type="Pfam" id="PF01926">
    <property type="entry name" value="MMR_HSR1"/>
    <property type="match status" value="1"/>
</dbReference>
<dbReference type="SUPFAM" id="SSF52540">
    <property type="entry name" value="P-loop containing nucleoside triphosphate hydrolases"/>
    <property type="match status" value="1"/>
</dbReference>
<dbReference type="SUPFAM" id="SSF54814">
    <property type="entry name" value="Prokaryotic type KH domain (KH-domain type II)"/>
    <property type="match status" value="1"/>
</dbReference>
<dbReference type="PROSITE" id="PS51713">
    <property type="entry name" value="G_ERA"/>
    <property type="match status" value="1"/>
</dbReference>
<dbReference type="PROSITE" id="PS50823">
    <property type="entry name" value="KH_TYPE_2"/>
    <property type="match status" value="1"/>
</dbReference>
<keyword id="KW-0997">Cell inner membrane</keyword>
<keyword id="KW-1003">Cell membrane</keyword>
<keyword id="KW-0963">Cytoplasm</keyword>
<keyword id="KW-0342">GTP-binding</keyword>
<keyword id="KW-0472">Membrane</keyword>
<keyword id="KW-0547">Nucleotide-binding</keyword>
<keyword id="KW-0694">RNA-binding</keyword>
<feature type="chain" id="PRO_0000180042" description="GTPase Era">
    <location>
        <begin position="1"/>
        <end position="339"/>
    </location>
</feature>
<feature type="domain" description="RPE1 insert">
    <location>
        <begin position="4"/>
        <end position="48"/>
    </location>
</feature>
<feature type="domain" description="Era-type G" evidence="2">
    <location>
        <begin position="51"/>
        <end position="220"/>
    </location>
</feature>
<feature type="domain" description="KH type-2" evidence="1">
    <location>
        <begin position="248"/>
        <end position="325"/>
    </location>
</feature>
<feature type="region of interest" description="G1" evidence="2">
    <location>
        <begin position="59"/>
        <end position="66"/>
    </location>
</feature>
<feature type="region of interest" description="G2" evidence="2">
    <location>
        <begin position="85"/>
        <end position="89"/>
    </location>
</feature>
<feature type="region of interest" description="G3" evidence="2">
    <location>
        <begin position="106"/>
        <end position="109"/>
    </location>
</feature>
<feature type="region of interest" description="G4" evidence="2">
    <location>
        <begin position="168"/>
        <end position="171"/>
    </location>
</feature>
<feature type="region of interest" description="G5" evidence="2">
    <location>
        <begin position="196"/>
        <end position="198"/>
    </location>
</feature>
<feature type="binding site" evidence="1">
    <location>
        <begin position="59"/>
        <end position="66"/>
    </location>
    <ligand>
        <name>GTP</name>
        <dbReference type="ChEBI" id="CHEBI:37565"/>
    </ligand>
</feature>
<feature type="binding site" evidence="1">
    <location>
        <begin position="106"/>
        <end position="110"/>
    </location>
    <ligand>
        <name>GTP</name>
        <dbReference type="ChEBI" id="CHEBI:37565"/>
    </ligand>
</feature>
<feature type="binding site" evidence="1">
    <location>
        <begin position="168"/>
        <end position="171"/>
    </location>
    <ligand>
        <name>GTP</name>
        <dbReference type="ChEBI" id="CHEBI:37565"/>
    </ligand>
</feature>